<feature type="chain" id="PRO_1000069441" description="Putative glutamate--cysteine ligase 2">
    <location>
        <begin position="1"/>
        <end position="376"/>
    </location>
</feature>
<name>GCS2_MYCTA</name>
<evidence type="ECO:0000255" key="1">
    <source>
        <dbReference type="HAMAP-Rule" id="MF_01609"/>
    </source>
</evidence>
<accession>A5TZF9</accession>
<gene>
    <name type="ordered locus">MRA_0438</name>
</gene>
<sequence length="376" mass="42295">MPARRSAARIDFAGSPRPTLGVEWEFALVDSQTRDLSNEATAVIAEIGENPRVHKELLRNTVEIVSGICECTAEAMQDLRDTLGPARQIVRDRGMELFCAGTHPFARWSAQKLTDAPRYAELIKRTQWWGRQMLIWGVHVHVGIRSAHKVMPIMTSLLNYYPHLLALSASSPWWGGEDTGYASNRAMMFQQLPTAGLPFHFQRWAEFEGFVYDQKKTGIIDHMDEIRWDIRPSPHLGTLEVRICDGVSNLRELGALVALTHCLIVDLDRRLDAGETLPTMPPWHVQENKWRAARYGLDAVIILDADSNERLVTDDLADVLTRLEPVAKSLNCADELAAVSDIYRDGASYQRQLRVAQQHDGDLRAVVDALVAELVI</sequence>
<proteinExistence type="inferred from homology"/>
<protein>
    <recommendedName>
        <fullName evidence="1">Putative glutamate--cysteine ligase 2</fullName>
        <ecNumber evidence="1">6.3.2.2</ecNumber>
    </recommendedName>
    <alternativeName>
        <fullName evidence="1">Gamma-glutamylcysteine synthetase 2</fullName>
        <shortName evidence="1">GCS 2</shortName>
        <shortName evidence="1">Gamma-GCS 2</shortName>
    </alternativeName>
</protein>
<organism>
    <name type="scientific">Mycobacterium tuberculosis (strain ATCC 25177 / H37Ra)</name>
    <dbReference type="NCBI Taxonomy" id="419947"/>
    <lineage>
        <taxon>Bacteria</taxon>
        <taxon>Bacillati</taxon>
        <taxon>Actinomycetota</taxon>
        <taxon>Actinomycetes</taxon>
        <taxon>Mycobacteriales</taxon>
        <taxon>Mycobacteriaceae</taxon>
        <taxon>Mycobacterium</taxon>
        <taxon>Mycobacterium tuberculosis complex</taxon>
    </lineage>
</organism>
<reference key="1">
    <citation type="journal article" date="2008" name="PLoS ONE">
        <title>Genetic basis of virulence attenuation revealed by comparative genomic analysis of Mycobacterium tuberculosis strain H37Ra versus H37Rv.</title>
        <authorList>
            <person name="Zheng H."/>
            <person name="Lu L."/>
            <person name="Wang B."/>
            <person name="Pu S."/>
            <person name="Zhang X."/>
            <person name="Zhu G."/>
            <person name="Shi W."/>
            <person name="Zhang L."/>
            <person name="Wang H."/>
            <person name="Wang S."/>
            <person name="Zhao G."/>
            <person name="Zhang Y."/>
        </authorList>
    </citation>
    <scope>NUCLEOTIDE SEQUENCE [LARGE SCALE GENOMIC DNA]</scope>
    <source>
        <strain>ATCC 25177 / H37Ra</strain>
    </source>
</reference>
<keyword id="KW-0067">ATP-binding</keyword>
<keyword id="KW-0436">Ligase</keyword>
<keyword id="KW-0547">Nucleotide-binding</keyword>
<keyword id="KW-1185">Reference proteome</keyword>
<comment type="function">
    <text evidence="1">ATP-dependent carboxylate-amine ligase which exhibits weak glutamate--cysteine ligase activity.</text>
</comment>
<comment type="catalytic activity">
    <reaction evidence="1">
        <text>L-cysteine + L-glutamate + ATP = gamma-L-glutamyl-L-cysteine + ADP + phosphate + H(+)</text>
        <dbReference type="Rhea" id="RHEA:13285"/>
        <dbReference type="ChEBI" id="CHEBI:15378"/>
        <dbReference type="ChEBI" id="CHEBI:29985"/>
        <dbReference type="ChEBI" id="CHEBI:30616"/>
        <dbReference type="ChEBI" id="CHEBI:35235"/>
        <dbReference type="ChEBI" id="CHEBI:43474"/>
        <dbReference type="ChEBI" id="CHEBI:58173"/>
        <dbReference type="ChEBI" id="CHEBI:456216"/>
        <dbReference type="EC" id="6.3.2.2"/>
    </reaction>
</comment>
<comment type="similarity">
    <text evidence="1">Belongs to the glutamate--cysteine ligase type 2 family. YbdK subfamily.</text>
</comment>
<dbReference type="EC" id="6.3.2.2" evidence="1"/>
<dbReference type="EMBL" id="CP000611">
    <property type="protein sequence ID" value="ABQ72159.1"/>
    <property type="molecule type" value="Genomic_DNA"/>
</dbReference>
<dbReference type="RefSeq" id="WP_003900145.1">
    <property type="nucleotide sequence ID" value="NZ_CP016972.1"/>
</dbReference>
<dbReference type="SMR" id="A5TZF9"/>
<dbReference type="KEGG" id="mra:MRA_0438"/>
<dbReference type="eggNOG" id="COG2170">
    <property type="taxonomic scope" value="Bacteria"/>
</dbReference>
<dbReference type="HOGENOM" id="CLU_044848_1_0_11"/>
<dbReference type="Proteomes" id="UP000001988">
    <property type="component" value="Chromosome"/>
</dbReference>
<dbReference type="GO" id="GO:0005524">
    <property type="term" value="F:ATP binding"/>
    <property type="evidence" value="ECO:0007669"/>
    <property type="project" value="UniProtKB-KW"/>
</dbReference>
<dbReference type="GO" id="GO:0004357">
    <property type="term" value="F:glutamate-cysteine ligase activity"/>
    <property type="evidence" value="ECO:0007669"/>
    <property type="project" value="UniProtKB-EC"/>
</dbReference>
<dbReference type="GO" id="GO:0042398">
    <property type="term" value="P:modified amino acid biosynthetic process"/>
    <property type="evidence" value="ECO:0007669"/>
    <property type="project" value="InterPro"/>
</dbReference>
<dbReference type="FunFam" id="3.30.590.20:FF:000004">
    <property type="entry name" value="Putative glutamate--cysteine ligase 2"/>
    <property type="match status" value="1"/>
</dbReference>
<dbReference type="Gene3D" id="3.30.590.20">
    <property type="match status" value="1"/>
</dbReference>
<dbReference type="HAMAP" id="MF_01609">
    <property type="entry name" value="Glu_cys_ligase_2"/>
    <property type="match status" value="1"/>
</dbReference>
<dbReference type="InterPro" id="IPR050141">
    <property type="entry name" value="GCL_type2/YbdK_subfam"/>
</dbReference>
<dbReference type="InterPro" id="IPR006336">
    <property type="entry name" value="GCS2"/>
</dbReference>
<dbReference type="InterPro" id="IPR014746">
    <property type="entry name" value="Gln_synth/guanido_kin_cat_dom"/>
</dbReference>
<dbReference type="InterPro" id="IPR011793">
    <property type="entry name" value="YbdK"/>
</dbReference>
<dbReference type="NCBIfam" id="TIGR02050">
    <property type="entry name" value="gshA_cyan_rel"/>
    <property type="match status" value="1"/>
</dbReference>
<dbReference type="NCBIfam" id="NF010042">
    <property type="entry name" value="PRK13517.1-2"/>
    <property type="match status" value="1"/>
</dbReference>
<dbReference type="NCBIfam" id="NF010043">
    <property type="entry name" value="PRK13517.1-3"/>
    <property type="match status" value="1"/>
</dbReference>
<dbReference type="NCBIfam" id="NF010044">
    <property type="entry name" value="PRK13517.1-4"/>
    <property type="match status" value="1"/>
</dbReference>
<dbReference type="PANTHER" id="PTHR36510">
    <property type="entry name" value="GLUTAMATE--CYSTEINE LIGASE 2-RELATED"/>
    <property type="match status" value="1"/>
</dbReference>
<dbReference type="PANTHER" id="PTHR36510:SF1">
    <property type="entry name" value="GLUTAMATE--CYSTEINE LIGASE 2-RELATED"/>
    <property type="match status" value="1"/>
</dbReference>
<dbReference type="Pfam" id="PF04107">
    <property type="entry name" value="GCS2"/>
    <property type="match status" value="1"/>
</dbReference>
<dbReference type="SUPFAM" id="SSF55931">
    <property type="entry name" value="Glutamine synthetase/guanido kinase"/>
    <property type="match status" value="1"/>
</dbReference>